<protein>
    <recommendedName>
        <fullName>Chemotaxis protein CheY homolog</fullName>
    </recommendedName>
</protein>
<evidence type="ECO:0000250" key="1">
    <source>
        <dbReference type="UniProtKB" id="A0A0H3AMJ9"/>
    </source>
</evidence>
<evidence type="ECO:0000250" key="2">
    <source>
        <dbReference type="UniProtKB" id="P0AE67"/>
    </source>
</evidence>
<evidence type="ECO:0000255" key="3">
    <source>
        <dbReference type="PROSITE-ProRule" id="PRU00169"/>
    </source>
</evidence>
<evidence type="ECO:0000305" key="4"/>
<reference key="1">
    <citation type="journal article" date="2000" name="Nature">
        <title>The genome sequence of the food-borne pathogen Campylobacter jejuni reveals hypervariable sequences.</title>
        <authorList>
            <person name="Parkhill J."/>
            <person name="Wren B.W."/>
            <person name="Mungall K.L."/>
            <person name="Ketley J.M."/>
            <person name="Churcher C.M."/>
            <person name="Basham D."/>
            <person name="Chillingworth T."/>
            <person name="Davies R.M."/>
            <person name="Feltwell T."/>
            <person name="Holroyd S."/>
            <person name="Jagels K."/>
            <person name="Karlyshev A.V."/>
            <person name="Moule S."/>
            <person name="Pallen M.J."/>
            <person name="Penn C.W."/>
            <person name="Quail M.A."/>
            <person name="Rajandream M.A."/>
            <person name="Rutherford K.M."/>
            <person name="van Vliet A.H.M."/>
            <person name="Whitehead S."/>
            <person name="Barrell B.G."/>
        </authorList>
    </citation>
    <scope>NUCLEOTIDE SEQUENCE [LARGE SCALE GENOMIC DNA]</scope>
    <source>
        <strain>ATCC 700819 / NCTC 11168</strain>
    </source>
</reference>
<name>CHEY_CAMJE</name>
<dbReference type="EMBL" id="AL111168">
    <property type="protein sequence ID" value="CAL35235.1"/>
    <property type="molecule type" value="Genomic_DNA"/>
</dbReference>
<dbReference type="PIR" id="A81316">
    <property type="entry name" value="A81316"/>
</dbReference>
<dbReference type="RefSeq" id="WP_002866134.1">
    <property type="nucleotide sequence ID" value="NZ_SZUC01000001.1"/>
</dbReference>
<dbReference type="RefSeq" id="YP_002344511.1">
    <property type="nucleotide sequence ID" value="NC_002163.1"/>
</dbReference>
<dbReference type="SMR" id="P0C635"/>
<dbReference type="IntAct" id="P0C635">
    <property type="interactions" value="6"/>
</dbReference>
<dbReference type="STRING" id="192222.Cj1118c"/>
<dbReference type="PaxDb" id="192222-Cj1118c"/>
<dbReference type="EnsemblBacteria" id="CAL35235">
    <property type="protein sequence ID" value="CAL35235"/>
    <property type="gene ID" value="Cj1118c"/>
</dbReference>
<dbReference type="GeneID" id="905409"/>
<dbReference type="KEGG" id="cje:Cj1118c"/>
<dbReference type="PATRIC" id="fig|192222.6.peg.1100"/>
<dbReference type="eggNOG" id="COG0745">
    <property type="taxonomic scope" value="Bacteria"/>
</dbReference>
<dbReference type="HOGENOM" id="CLU_000445_69_12_7"/>
<dbReference type="OrthoDB" id="9786548at2"/>
<dbReference type="Proteomes" id="UP000000799">
    <property type="component" value="Chromosome"/>
</dbReference>
<dbReference type="GO" id="GO:0005737">
    <property type="term" value="C:cytoplasm"/>
    <property type="evidence" value="ECO:0007669"/>
    <property type="project" value="UniProtKB-SubCell"/>
</dbReference>
<dbReference type="GO" id="GO:0046872">
    <property type="term" value="F:metal ion binding"/>
    <property type="evidence" value="ECO:0007669"/>
    <property type="project" value="UniProtKB-KW"/>
</dbReference>
<dbReference type="GO" id="GO:0097588">
    <property type="term" value="P:archaeal or bacterial-type flagellum-dependent cell motility"/>
    <property type="evidence" value="ECO:0007669"/>
    <property type="project" value="UniProtKB-KW"/>
</dbReference>
<dbReference type="GO" id="GO:0006935">
    <property type="term" value="P:chemotaxis"/>
    <property type="evidence" value="ECO:0007669"/>
    <property type="project" value="UniProtKB-KW"/>
</dbReference>
<dbReference type="GO" id="GO:0000160">
    <property type="term" value="P:phosphorelay signal transduction system"/>
    <property type="evidence" value="ECO:0007669"/>
    <property type="project" value="UniProtKB-KW"/>
</dbReference>
<dbReference type="CDD" id="cd19923">
    <property type="entry name" value="REC_CheY_CheY3"/>
    <property type="match status" value="1"/>
</dbReference>
<dbReference type="Gene3D" id="3.40.50.2300">
    <property type="match status" value="1"/>
</dbReference>
<dbReference type="InterPro" id="IPR050595">
    <property type="entry name" value="Bact_response_regulator"/>
</dbReference>
<dbReference type="InterPro" id="IPR011006">
    <property type="entry name" value="CheY-like_superfamily"/>
</dbReference>
<dbReference type="InterPro" id="IPR001789">
    <property type="entry name" value="Sig_transdc_resp-reg_receiver"/>
</dbReference>
<dbReference type="PANTHER" id="PTHR44591:SF14">
    <property type="entry name" value="PROTEIN PILG"/>
    <property type="match status" value="1"/>
</dbReference>
<dbReference type="PANTHER" id="PTHR44591">
    <property type="entry name" value="STRESS RESPONSE REGULATOR PROTEIN 1"/>
    <property type="match status" value="1"/>
</dbReference>
<dbReference type="Pfam" id="PF00072">
    <property type="entry name" value="Response_reg"/>
    <property type="match status" value="1"/>
</dbReference>
<dbReference type="SMART" id="SM00448">
    <property type="entry name" value="REC"/>
    <property type="match status" value="1"/>
</dbReference>
<dbReference type="SUPFAM" id="SSF52172">
    <property type="entry name" value="CheY-like"/>
    <property type="match status" value="1"/>
</dbReference>
<dbReference type="PROSITE" id="PS50110">
    <property type="entry name" value="RESPONSE_REGULATORY"/>
    <property type="match status" value="1"/>
</dbReference>
<feature type="chain" id="PRO_0000081049" description="Chemotaxis protein CheY homolog">
    <location>
        <begin position="1"/>
        <end position="130"/>
    </location>
</feature>
<feature type="domain" description="Response regulatory" evidence="3">
    <location>
        <begin position="2"/>
        <end position="120"/>
    </location>
</feature>
<feature type="binding site" evidence="1">
    <location>
        <position position="7"/>
    </location>
    <ligand>
        <name>Mg(2+)</name>
        <dbReference type="ChEBI" id="CHEBI:18420"/>
    </ligand>
</feature>
<feature type="binding site" evidence="2">
    <location>
        <position position="8"/>
    </location>
    <ligand>
        <name>Mg(2+)</name>
        <dbReference type="ChEBI" id="CHEBI:18420"/>
    </ligand>
</feature>
<feature type="binding site" evidence="2">
    <location>
        <position position="53"/>
    </location>
    <ligand>
        <name>Mg(2+)</name>
        <dbReference type="ChEBI" id="CHEBI:18420"/>
    </ligand>
</feature>
<feature type="binding site" evidence="2">
    <location>
        <position position="55"/>
    </location>
    <ligand>
        <name>Mg(2+)</name>
        <dbReference type="ChEBI" id="CHEBI:18420"/>
    </ligand>
</feature>
<feature type="modified residue" description="4-aspartylphosphate" evidence="3">
    <location>
        <position position="53"/>
    </location>
</feature>
<comment type="function">
    <text evidence="2">Involved in the transmission of sensory signals from the chemoreceptors to the flagellar motors. CheY seems to regulate the clockwise (CW) rotation (By similarity).</text>
</comment>
<comment type="cofactor">
    <cofactor evidence="2">
        <name>Mg(2+)</name>
        <dbReference type="ChEBI" id="CHEBI:18420"/>
    </cofactor>
    <text evidence="2">Binds 1 Mg(2+) ion per subunit.</text>
</comment>
<comment type="subcellular location">
    <subcellularLocation>
        <location evidence="4">Cytoplasm</location>
    </subcellularLocation>
</comment>
<sequence>MKLLVVDDSSTMRRIIKNTLTRLGHDDVLEAEHGVEAWDLLTKNEDVKVLITDWNMPEMNGLELVKKVRAEKKYEDMPIIMVTTEGGKAEVITALKAGVNNYIVKPFTPQVLKEKLEDVLGTGSGEGAAE</sequence>
<organism>
    <name type="scientific">Campylobacter jejuni subsp. jejuni serotype O:2 (strain ATCC 700819 / NCTC 11168)</name>
    <dbReference type="NCBI Taxonomy" id="192222"/>
    <lineage>
        <taxon>Bacteria</taxon>
        <taxon>Pseudomonadati</taxon>
        <taxon>Campylobacterota</taxon>
        <taxon>Epsilonproteobacteria</taxon>
        <taxon>Campylobacterales</taxon>
        <taxon>Campylobacteraceae</taxon>
        <taxon>Campylobacter</taxon>
    </lineage>
</organism>
<proteinExistence type="inferred from homology"/>
<gene>
    <name type="primary">cheY</name>
    <name type="ordered locus">Cj1118c</name>
</gene>
<keyword id="KW-0145">Chemotaxis</keyword>
<keyword id="KW-0963">Cytoplasm</keyword>
<keyword id="KW-0283">Flagellar rotation</keyword>
<keyword id="KW-0460">Magnesium</keyword>
<keyword id="KW-0479">Metal-binding</keyword>
<keyword id="KW-0597">Phosphoprotein</keyword>
<keyword id="KW-1185">Reference proteome</keyword>
<keyword id="KW-0902">Two-component regulatory system</keyword>
<accession>P0C635</accession>
<accession>P71129</accession>
<accession>Q0P9D6</accession>